<sequence length="864" mass="95556">MADRVDWLQSQSGVCKVGVYSPGDNQHQDWKMDTSTDPVRVLSWLRKDLEKSTAGFQDSRFKPGESSFVEEVAYPVDQRKGFCVDYYNTTNKGSPGRLHFEMSHKENPSQGLISHVGNGGSIDEVSFYANRLTNLVIAMARKEINEKIHGAENKCVHQSLYMGDEPTPHKSLSTVASELVNETVTACSKNISSDKAPGSGDRASGSSQAPGLRYTSTLKIKESTKEGKCPDDKPGTKKSFFYKEVFESRNAGDAKEGGRSLPGDQKLFRTSPDNRPDDFSNSISQGIMTYANSVVSDMMVSIMKTLKIQVKDTTIATILLKKVLMKHAKEVVSDLIDSFMKNLHGVTGSLMTDTDFVSAVKRSFFSHGSQKATDIMDAMLGKLYNVMFAKKFPENIRRARDKSESYSLISTKSRAGDPKLSNLNFAMKSESKLKENLFSTCKLEKEKTCAETLGEHIIKEGLHMWHKSQQKSPGLERAAKLGNAPQEVSFECPDPCEANPPHQPQPPENFANFMCDSDSWAKDLIVSALLLIQYHLAQGGKMDAQSFLEAAASTNFPTNKPPPPSPVVQDECKLKSPPHKICDQEQTEKKDLMSVIFNFIRNLLSETIFKSSRNCESNVHEQNTQEEEIHPCERPKTPCERPITPPAPKFCEDEEATGGALSGLTKMVANQLDNCMNGQMVEHLMDSVMKLCLIIAKSCDSPLSELGEEKCGDASRPNSAFPDNLYECLPVKGTGTAEALLQNAYLTIHNELRGLSGQPPEGCEIPKVIVSNHNLADTVQNKQLQAVLQWVAASELNVPILYFAGDDEGIQEKLLQLSATAVEKGRSVGEVLQSVLRYEKERQLDEAVGNVTRLQLLDWLMANL</sequence>
<keyword id="KW-0966">Cell projection</keyword>
<keyword id="KW-0969">Cilium</keyword>
<keyword id="KW-0968">Cytoplasmic vesicle</keyword>
<keyword id="KW-0282">Flagellum</keyword>
<keyword id="KW-0597">Phosphoprotein</keyword>
<keyword id="KW-1185">Reference proteome</keyword>
<dbReference type="EMBL" id="AF093406">
    <property type="protein sequence ID" value="AAC63369.1"/>
    <property type="molecule type" value="mRNA"/>
</dbReference>
<dbReference type="EMBL" id="CH466523">
    <property type="protein sequence ID" value="EDK99845.1"/>
    <property type="molecule type" value="Genomic_DNA"/>
</dbReference>
<dbReference type="EMBL" id="BC100458">
    <property type="protein sequence ID" value="AAI00459.1"/>
    <property type="molecule type" value="mRNA"/>
</dbReference>
<dbReference type="CCDS" id="CCDS20558.1"/>
<dbReference type="RefSeq" id="NP_033780.2">
    <property type="nucleotide sequence ID" value="NM_009650.2"/>
</dbReference>
<dbReference type="SMR" id="O88987"/>
<dbReference type="BioGRID" id="198050">
    <property type="interactions" value="1"/>
</dbReference>
<dbReference type="FunCoup" id="O88987">
    <property type="interactions" value="30"/>
</dbReference>
<dbReference type="IntAct" id="O88987">
    <property type="interactions" value="2"/>
</dbReference>
<dbReference type="STRING" id="10090.ENSMUSP00000093091"/>
<dbReference type="GlyGen" id="O88987">
    <property type="glycosylation" value="1 site"/>
</dbReference>
<dbReference type="iPTMnet" id="O88987"/>
<dbReference type="PhosphoSitePlus" id="O88987"/>
<dbReference type="SwissPalm" id="O88987"/>
<dbReference type="PaxDb" id="10090-ENSMUSP00000093091"/>
<dbReference type="PeptideAtlas" id="O88987"/>
<dbReference type="ProteomicsDB" id="296150"/>
<dbReference type="Antibodypedia" id="22296">
    <property type="antibodies" value="185 antibodies from 32 providers"/>
</dbReference>
<dbReference type="DNASU" id="11642"/>
<dbReference type="Ensembl" id="ENSMUST00000095440.9">
    <property type="protein sequence ID" value="ENSMUSP00000093091.6"/>
    <property type="gene ID" value="ENSMUSG00000030344.12"/>
</dbReference>
<dbReference type="Ensembl" id="ENSMUST00000202574.2">
    <property type="protein sequence ID" value="ENSMUSP00000144405.2"/>
    <property type="gene ID" value="ENSMUSG00000030344.12"/>
</dbReference>
<dbReference type="Ensembl" id="ENSMUST00000202878.4">
    <property type="protein sequence ID" value="ENSMUSP00000143794.2"/>
    <property type="gene ID" value="ENSMUSG00000030344.12"/>
</dbReference>
<dbReference type="GeneID" id="11642"/>
<dbReference type="KEGG" id="mmu:11642"/>
<dbReference type="UCSC" id="uc009dvf.2">
    <property type="organism name" value="mouse"/>
</dbReference>
<dbReference type="AGR" id="MGI:1341149"/>
<dbReference type="CTD" id="10566"/>
<dbReference type="MGI" id="MGI:1341149">
    <property type="gene designation" value="Akap3"/>
</dbReference>
<dbReference type="VEuPathDB" id="HostDB:ENSMUSG00000030344"/>
<dbReference type="eggNOG" id="ENOG502SM7F">
    <property type="taxonomic scope" value="Eukaryota"/>
</dbReference>
<dbReference type="GeneTree" id="ENSGT00940000153313"/>
<dbReference type="HOGENOM" id="CLU_017072_0_0_1"/>
<dbReference type="InParanoid" id="O88987"/>
<dbReference type="OMA" id="MADKVDW"/>
<dbReference type="OrthoDB" id="6154436at2759"/>
<dbReference type="PhylomeDB" id="O88987"/>
<dbReference type="TreeFam" id="TF105403"/>
<dbReference type="BioGRID-ORCS" id="11642">
    <property type="hits" value="0 hits in 77 CRISPR screens"/>
</dbReference>
<dbReference type="ChiTaRS" id="Akap3">
    <property type="organism name" value="mouse"/>
</dbReference>
<dbReference type="PRO" id="PR:O88987"/>
<dbReference type="Proteomes" id="UP000000589">
    <property type="component" value="Chromosome 6"/>
</dbReference>
<dbReference type="RNAct" id="O88987">
    <property type="molecule type" value="protein"/>
</dbReference>
<dbReference type="Bgee" id="ENSMUSG00000030344">
    <property type="expression patterns" value="Expressed in seminiferous tubule of testis and 13 other cell types or tissues"/>
</dbReference>
<dbReference type="GO" id="GO:0001669">
    <property type="term" value="C:acrosomal vesicle"/>
    <property type="evidence" value="ECO:0000314"/>
    <property type="project" value="MGI"/>
</dbReference>
<dbReference type="GO" id="GO:0031514">
    <property type="term" value="C:motile cilium"/>
    <property type="evidence" value="ECO:0000314"/>
    <property type="project" value="MGI"/>
</dbReference>
<dbReference type="GO" id="GO:0035686">
    <property type="term" value="C:sperm fibrous sheath"/>
    <property type="evidence" value="ECO:0000314"/>
    <property type="project" value="UniProtKB"/>
</dbReference>
<dbReference type="GO" id="GO:0097225">
    <property type="term" value="C:sperm midpiece"/>
    <property type="evidence" value="ECO:0007669"/>
    <property type="project" value="Ensembl"/>
</dbReference>
<dbReference type="GO" id="GO:0097228">
    <property type="term" value="C:sperm principal piece"/>
    <property type="evidence" value="ECO:0000314"/>
    <property type="project" value="UniProtKB"/>
</dbReference>
<dbReference type="GO" id="GO:0051018">
    <property type="term" value="F:protein kinase A binding"/>
    <property type="evidence" value="ECO:0000315"/>
    <property type="project" value="MGI"/>
</dbReference>
<dbReference type="GO" id="GO:0001835">
    <property type="term" value="P:blastocyst hatching"/>
    <property type="evidence" value="ECO:0000315"/>
    <property type="project" value="MGI"/>
</dbReference>
<dbReference type="GO" id="GO:0007178">
    <property type="term" value="P:cell surface receptor protein serine/threonine kinase signaling pathway"/>
    <property type="evidence" value="ECO:0000353"/>
    <property type="project" value="MGI"/>
</dbReference>
<dbReference type="GO" id="GO:0045184">
    <property type="term" value="P:establishment of protein localization"/>
    <property type="evidence" value="ECO:0000315"/>
    <property type="project" value="UniProtKB"/>
</dbReference>
<dbReference type="GO" id="GO:0030317">
    <property type="term" value="P:flagellated sperm motility"/>
    <property type="evidence" value="ECO:0000315"/>
    <property type="project" value="UniProtKB"/>
</dbReference>
<dbReference type="GO" id="GO:0008104">
    <property type="term" value="P:protein localization"/>
    <property type="evidence" value="ECO:0000315"/>
    <property type="project" value="MGI"/>
</dbReference>
<dbReference type="InterPro" id="IPR020799">
    <property type="entry name" value="AKAP_110"/>
</dbReference>
<dbReference type="InterPro" id="IPR018292">
    <property type="entry name" value="AKAP_110_C"/>
</dbReference>
<dbReference type="InterPro" id="IPR008382">
    <property type="entry name" value="SPHK1-interactor_AKAP_110"/>
</dbReference>
<dbReference type="PANTHER" id="PTHR10226">
    <property type="entry name" value="A KINASE ANCHOR PROTEIN"/>
    <property type="match status" value="1"/>
</dbReference>
<dbReference type="PANTHER" id="PTHR10226:SF9">
    <property type="entry name" value="A-KINASE ANCHOR PROTEIN 3"/>
    <property type="match status" value="1"/>
</dbReference>
<dbReference type="Pfam" id="PF05716">
    <property type="entry name" value="AKAP_110"/>
    <property type="match status" value="1"/>
</dbReference>
<dbReference type="SMART" id="SM00807">
    <property type="entry name" value="AKAP_110"/>
    <property type="match status" value="1"/>
</dbReference>
<reference key="1">
    <citation type="journal article" date="1999" name="Mol. Endocrinol.">
        <title>Isolation and molecular characterization of AKAP110, a novel, sperm-specific protein kinase A-anchoring protein.</title>
        <authorList>
            <person name="Vijayaraghavan S."/>
            <person name="Liberty G.A."/>
            <person name="Mohan J."/>
            <person name="Winfrey V.P."/>
            <person name="Olson G.E."/>
            <person name="Carr D.W."/>
        </authorList>
    </citation>
    <scope>NUCLEOTIDE SEQUENCE [MRNA]</scope>
    <source>
        <tissue>Testis</tissue>
    </source>
</reference>
<reference key="2">
    <citation type="submission" date="2005-07" db="EMBL/GenBank/DDBJ databases">
        <authorList>
            <person name="Mural R.J."/>
            <person name="Adams M.D."/>
            <person name="Myers E.W."/>
            <person name="Smith H.O."/>
            <person name="Venter J.C."/>
        </authorList>
    </citation>
    <scope>NUCLEOTIDE SEQUENCE [LARGE SCALE GENOMIC DNA]</scope>
</reference>
<reference key="3">
    <citation type="journal article" date="2004" name="Genome Res.">
        <title>The status, quality, and expansion of the NIH full-length cDNA project: the Mammalian Gene Collection (MGC).</title>
        <authorList>
            <consortium name="The MGC Project Team"/>
        </authorList>
    </citation>
    <scope>NUCLEOTIDE SEQUENCE [LARGE SCALE MRNA]</scope>
    <source>
        <tissue>Testis</tissue>
    </source>
</reference>
<reference key="4">
    <citation type="journal article" date="2001" name="J. Biol. Chem.">
        <title>Identification of sperm-specific proteins that interact with A-kinase anchoring proteins in a manner similar to the type II regulatory subunit of PKA.</title>
        <authorList>
            <person name="Carr D.W."/>
            <person name="Fujita A."/>
            <person name="Stentz C.L."/>
            <person name="Liberty G.A."/>
            <person name="Olson G.E."/>
            <person name="Narumiya S."/>
        </authorList>
    </citation>
    <scope>SUBCELLULAR LOCATION</scope>
</reference>
<reference key="5">
    <citation type="journal article" date="2010" name="Cell">
        <title>A tissue-specific atlas of mouse protein phosphorylation and expression.</title>
        <authorList>
            <person name="Huttlin E.L."/>
            <person name="Jedrychowski M.P."/>
            <person name="Elias J.E."/>
            <person name="Goswami T."/>
            <person name="Rad R."/>
            <person name="Beausoleil S.A."/>
            <person name="Villen J."/>
            <person name="Haas W."/>
            <person name="Sowa M.E."/>
            <person name="Gygi S.P."/>
        </authorList>
    </citation>
    <scope>IDENTIFICATION BY MASS SPECTROMETRY [LARGE SCALE ANALYSIS]</scope>
    <source>
        <tissue>Testis</tissue>
    </source>
</reference>
<reference key="6">
    <citation type="journal article" date="2020" name="Development">
        <title>Lack of AKAP3 disrupts integrity of the subcellular structure and proteome of mouse sperm and causes male sterility.</title>
        <authorList>
            <person name="Xu K."/>
            <person name="Yang L."/>
            <person name="Zhang L."/>
            <person name="Qi H."/>
        </authorList>
    </citation>
    <scope>FUNCTION</scope>
    <scope>SUBCELLULAR LOCATION</scope>
    <scope>DISRUPTION PHENOTYPE</scope>
</reference>
<reference key="7">
    <citation type="journal article" date="2023" name="J. Genet. Genomics">
        <title>Coiled-coil domain-containing 38 is required for acrosome biogenesis and fibrous sheath assembly in mice.</title>
        <authorList>
            <person name="Wang Y."/>
            <person name="Huang X."/>
            <person name="Sun G."/>
            <person name="Chen J."/>
            <person name="Wu B."/>
            <person name="Luo J."/>
            <person name="Tang S."/>
            <person name="Dai P."/>
            <person name="Zhang F."/>
            <person name="Li J."/>
            <person name="Wang L."/>
        </authorList>
    </citation>
    <scope>SUBCELLULAR LOCATION</scope>
</reference>
<reference key="8">
    <citation type="journal article" date="2023" name="Mol. Cell. Proteomics">
        <title>STK33 phosphorylates fibrous sheath protein AKAP3/4 to regulate sperm flagella assembly in spermiogenesis.</title>
        <authorList>
            <person name="Yu W."/>
            <person name="Li Y."/>
            <person name="Chen H."/>
            <person name="Cui Y."/>
            <person name="Situ C."/>
            <person name="Yao L."/>
            <person name="Zhang X."/>
            <person name="Lu S."/>
            <person name="Liu L."/>
            <person name="Li L."/>
            <person name="Ren J."/>
            <person name="Guo Y."/>
            <person name="Huo Z."/>
            <person name="Chen Y."/>
            <person name="Li H."/>
            <person name="Jiang T."/>
            <person name="Gu Y."/>
            <person name="Wang C."/>
            <person name="Zhu T."/>
            <person name="Li Y."/>
            <person name="Hu Z."/>
            <person name="Guo X."/>
        </authorList>
    </citation>
    <scope>PHOSPHORYLATION AT SER-12</scope>
</reference>
<name>AKAP3_MOUSE</name>
<comment type="function">
    <text evidence="4">Structural component of sperm fibrous sheath (PubMed:31969357). Required for the formation of the subcellular structure of the sperm flagellum, sperm motility and male fertility (PubMed:31969357).</text>
</comment>
<comment type="subunit">
    <text evidence="1">Interacts with ROPN1 and ROPN1L. Interacts with QRICH2.</text>
</comment>
<comment type="interaction">
    <interactant intactId="EBI-9033539">
        <id>O88987</id>
    </interactant>
    <interactant intactId="EBI-10818333">
        <id>Q99MP8</id>
        <label>Brap</label>
    </interactant>
    <organismsDiffer>false</organismsDiffer>
    <experiments>3</experiments>
</comment>
<comment type="subcellular location">
    <subcellularLocation>
        <location evidence="3">Cytoplasmic vesicle</location>
        <location evidence="3">Secretory vesicle</location>
        <location evidence="3">Acrosome</location>
    </subcellularLocation>
    <subcellularLocation>
        <location evidence="3 4 6">Cell projection</location>
        <location evidence="3 4 6">Cilium</location>
        <location evidence="3 4 6">Flagellum</location>
    </subcellularLocation>
    <text evidence="3 4 6">Dorsal margin of the acrosomal segment (PubMed:11278869). Ribs of the fibrous sheath in the principal piece of the sperm tail (PubMed:11278869, PubMed:31969357, PubMed:37709195).</text>
</comment>
<comment type="domain">
    <text evidence="1">RII-binding site, predicted to form an amphipathic helix, could participate in protein-protein interactions with a complementary surface on the R-subunit dimer.</text>
</comment>
<comment type="PTM">
    <text evidence="1 5">Phosphorylated by STK33 during sperm flagella assembly (PubMed:37146716). Phosphorylated on tyrosine (By similarity).</text>
</comment>
<comment type="disruption phenotype">
    <text evidence="4">Male mice are sterile due to sperm morphology abnormalities (PubMed:31969357). The absence of Akap3 affects the integrity of sperm structure, causing mislocalizations of sperm proteins (PubMed:31969357).</text>
</comment>
<comment type="similarity">
    <text evidence="9">Belongs to the AKAP110 family.</text>
</comment>
<proteinExistence type="evidence at protein level"/>
<feature type="chain" id="PRO_0000064527" description="A-kinase anchor protein 3">
    <location>
        <begin position="1"/>
        <end position="864"/>
    </location>
</feature>
<feature type="region of interest" description="PKA-RII subunit binding domain" evidence="1">
    <location>
        <begin position="125"/>
        <end position="138"/>
    </location>
</feature>
<feature type="region of interest" description="Disordered" evidence="2">
    <location>
        <begin position="190"/>
        <end position="235"/>
    </location>
</feature>
<feature type="region of interest" description="Disordered" evidence="2">
    <location>
        <begin position="251"/>
        <end position="281"/>
    </location>
</feature>
<feature type="region of interest" description="Disordered" evidence="2">
    <location>
        <begin position="619"/>
        <end position="638"/>
    </location>
</feature>
<feature type="compositionally biased region" description="Polar residues" evidence="2">
    <location>
        <begin position="204"/>
        <end position="218"/>
    </location>
</feature>
<feature type="compositionally biased region" description="Basic and acidic residues" evidence="2">
    <location>
        <begin position="219"/>
        <end position="235"/>
    </location>
</feature>
<feature type="compositionally biased region" description="Basic and acidic residues" evidence="2">
    <location>
        <begin position="627"/>
        <end position="638"/>
    </location>
</feature>
<feature type="modified residue" description="Phosphoserine; by STK33" evidence="5">
    <location>
        <position position="12"/>
    </location>
</feature>
<feature type="modified residue" description="Phosphoserine" evidence="1">
    <location>
        <position position="206"/>
    </location>
</feature>
<feature type="modified residue" description="Phosphoserine" evidence="1">
    <location>
        <position position="405"/>
    </location>
</feature>
<feature type="modified residue" description="Phosphotyrosine" evidence="1">
    <location>
        <position position="406"/>
    </location>
</feature>
<feature type="sequence conflict" description="In Ref. 1; AAC63369." evidence="9" ref="1">
    <original>T</original>
    <variation>M</variation>
    <location>
        <position position="215"/>
    </location>
</feature>
<evidence type="ECO:0000250" key="1">
    <source>
        <dbReference type="UniProtKB" id="O75969"/>
    </source>
</evidence>
<evidence type="ECO:0000256" key="2">
    <source>
        <dbReference type="SAM" id="MobiDB-lite"/>
    </source>
</evidence>
<evidence type="ECO:0000269" key="3">
    <source>
    </source>
</evidence>
<evidence type="ECO:0000269" key="4">
    <source>
    </source>
</evidence>
<evidence type="ECO:0000269" key="5">
    <source>
    </source>
</evidence>
<evidence type="ECO:0000269" key="6">
    <source>
    </source>
</evidence>
<evidence type="ECO:0000303" key="7">
    <source>
    </source>
</evidence>
<evidence type="ECO:0000303" key="8">
    <source>
    </source>
</evidence>
<evidence type="ECO:0000305" key="9"/>
<evidence type="ECO:0000312" key="10">
    <source>
        <dbReference type="MGI" id="MGI:1341149"/>
    </source>
</evidence>
<protein>
    <recommendedName>
        <fullName evidence="9">A-kinase anchor protein 3</fullName>
        <shortName evidence="9">AKAP-3</shortName>
    </recommendedName>
    <alternativeName>
        <fullName evidence="7">A-kinase anchor protein 110 kDa</fullName>
        <shortName evidence="7">AKAP 110</shortName>
    </alternativeName>
    <alternativeName>
        <fullName>Protein kinase A-anchoring protein 3</fullName>
        <shortName>PRKA3</shortName>
    </alternativeName>
</protein>
<organism>
    <name type="scientific">Mus musculus</name>
    <name type="common">Mouse</name>
    <dbReference type="NCBI Taxonomy" id="10090"/>
    <lineage>
        <taxon>Eukaryota</taxon>
        <taxon>Metazoa</taxon>
        <taxon>Chordata</taxon>
        <taxon>Craniata</taxon>
        <taxon>Vertebrata</taxon>
        <taxon>Euteleostomi</taxon>
        <taxon>Mammalia</taxon>
        <taxon>Eutheria</taxon>
        <taxon>Euarchontoglires</taxon>
        <taxon>Glires</taxon>
        <taxon>Rodentia</taxon>
        <taxon>Myomorpha</taxon>
        <taxon>Muroidea</taxon>
        <taxon>Muridae</taxon>
        <taxon>Murinae</taxon>
        <taxon>Mus</taxon>
        <taxon>Mus</taxon>
    </lineage>
</organism>
<accession>O88987</accession>
<accession>Q497M9</accession>
<gene>
    <name evidence="8 10" type="primary">Akap3</name>
    <name evidence="7" type="synonym">Akap110</name>
</gene>